<dbReference type="EC" id="4.3.1.7" evidence="1"/>
<dbReference type="EMBL" id="CP001120">
    <property type="protein sequence ID" value="ACF70078.1"/>
    <property type="molecule type" value="Genomic_DNA"/>
</dbReference>
<dbReference type="RefSeq" id="WP_000372343.1">
    <property type="nucleotide sequence ID" value="NC_011083.1"/>
</dbReference>
<dbReference type="SMR" id="B4TCI7"/>
<dbReference type="KEGG" id="seh:SeHA_C2717"/>
<dbReference type="HOGENOM" id="CLU_068224_2_0_6"/>
<dbReference type="UniPathway" id="UPA00560"/>
<dbReference type="Proteomes" id="UP000001866">
    <property type="component" value="Chromosome"/>
</dbReference>
<dbReference type="GO" id="GO:0009350">
    <property type="term" value="C:ethanolamine ammonia-lyase complex"/>
    <property type="evidence" value="ECO:0007669"/>
    <property type="project" value="UniProtKB-UniRule"/>
</dbReference>
<dbReference type="GO" id="GO:0031471">
    <property type="term" value="C:ethanolamine degradation polyhedral organelle"/>
    <property type="evidence" value="ECO:0007669"/>
    <property type="project" value="UniProtKB-UniRule"/>
</dbReference>
<dbReference type="GO" id="GO:0031419">
    <property type="term" value="F:cobalamin binding"/>
    <property type="evidence" value="ECO:0007669"/>
    <property type="project" value="UniProtKB-UniRule"/>
</dbReference>
<dbReference type="GO" id="GO:0008851">
    <property type="term" value="F:ethanolamine ammonia-lyase activity"/>
    <property type="evidence" value="ECO:0007669"/>
    <property type="project" value="UniProtKB-UniRule"/>
</dbReference>
<dbReference type="GO" id="GO:0006520">
    <property type="term" value="P:amino acid metabolic process"/>
    <property type="evidence" value="ECO:0007669"/>
    <property type="project" value="InterPro"/>
</dbReference>
<dbReference type="GO" id="GO:0046336">
    <property type="term" value="P:ethanolamine catabolic process"/>
    <property type="evidence" value="ECO:0007669"/>
    <property type="project" value="UniProtKB-UniRule"/>
</dbReference>
<dbReference type="FunFam" id="3.40.50.11240:FF:000001">
    <property type="entry name" value="Ethanolamine ammonia-lyase light chain"/>
    <property type="match status" value="1"/>
</dbReference>
<dbReference type="Gene3D" id="6.10.140.690">
    <property type="match status" value="1"/>
</dbReference>
<dbReference type="Gene3D" id="6.10.250.2060">
    <property type="match status" value="1"/>
</dbReference>
<dbReference type="Gene3D" id="3.40.50.11240">
    <property type="entry name" value="Ethanolamine ammonia-lyase light chain (EutC)"/>
    <property type="match status" value="1"/>
</dbReference>
<dbReference type="HAMAP" id="MF_00601">
    <property type="entry name" value="EutC"/>
    <property type="match status" value="1"/>
</dbReference>
<dbReference type="InterPro" id="IPR009246">
    <property type="entry name" value="EutC"/>
</dbReference>
<dbReference type="InterPro" id="IPR042251">
    <property type="entry name" value="EutC_C"/>
</dbReference>
<dbReference type="NCBIfam" id="NF003971">
    <property type="entry name" value="PRK05465.1"/>
    <property type="match status" value="1"/>
</dbReference>
<dbReference type="PANTHER" id="PTHR39330">
    <property type="entry name" value="ETHANOLAMINE AMMONIA-LYASE LIGHT CHAIN"/>
    <property type="match status" value="1"/>
</dbReference>
<dbReference type="PANTHER" id="PTHR39330:SF1">
    <property type="entry name" value="ETHANOLAMINE AMMONIA-LYASE SMALL SUBUNIT"/>
    <property type="match status" value="1"/>
</dbReference>
<dbReference type="Pfam" id="PF05985">
    <property type="entry name" value="EutC"/>
    <property type="match status" value="1"/>
</dbReference>
<dbReference type="PIRSF" id="PIRSF018982">
    <property type="entry name" value="EutC"/>
    <property type="match status" value="1"/>
</dbReference>
<proteinExistence type="inferred from homology"/>
<keyword id="KW-1283">Bacterial microcompartment</keyword>
<keyword id="KW-0846">Cobalamin</keyword>
<keyword id="KW-0170">Cobalt</keyword>
<keyword id="KW-0456">Lyase</keyword>
<gene>
    <name evidence="1" type="primary">eutC</name>
    <name type="ordered locus">SeHA_C2717</name>
</gene>
<reference key="1">
    <citation type="journal article" date="2011" name="J. Bacteriol.">
        <title>Comparative genomics of 28 Salmonella enterica isolates: evidence for CRISPR-mediated adaptive sublineage evolution.</title>
        <authorList>
            <person name="Fricke W.F."/>
            <person name="Mammel M.K."/>
            <person name="McDermott P.F."/>
            <person name="Tartera C."/>
            <person name="White D.G."/>
            <person name="Leclerc J.E."/>
            <person name="Ravel J."/>
            <person name="Cebula T.A."/>
        </authorList>
    </citation>
    <scope>NUCLEOTIDE SEQUENCE [LARGE SCALE GENOMIC DNA]</scope>
    <source>
        <strain>SL476</strain>
    </source>
</reference>
<accession>B4TCI7</accession>
<comment type="function">
    <text evidence="1">Catalyzes the deamination of various vicinal amino-alcohols to oxo compounds. Allows this organism to utilize ethanolamine as the sole source of nitrogen and carbon in the presence of external vitamin B12.</text>
</comment>
<comment type="catalytic activity">
    <reaction evidence="1">
        <text>ethanolamine = acetaldehyde + NH4(+)</text>
        <dbReference type="Rhea" id="RHEA:15313"/>
        <dbReference type="ChEBI" id="CHEBI:15343"/>
        <dbReference type="ChEBI" id="CHEBI:28938"/>
        <dbReference type="ChEBI" id="CHEBI:57603"/>
        <dbReference type="EC" id="4.3.1.7"/>
    </reaction>
</comment>
<comment type="cofactor">
    <cofactor evidence="1">
        <name>adenosylcob(III)alamin</name>
        <dbReference type="ChEBI" id="CHEBI:18408"/>
    </cofactor>
    <text evidence="1">Binds between the large and small subunits.</text>
</comment>
<comment type="pathway">
    <text evidence="1">Amine and polyamine degradation; ethanolamine degradation.</text>
</comment>
<comment type="subunit">
    <text evidence="1">The basic unit is a heterodimer which dimerizes to form tetramers. The heterotetramers trimerize; 6 large subunits form a core ring with 6 small subunits projecting outwards.</text>
</comment>
<comment type="subcellular location">
    <subcellularLocation>
        <location evidence="1">Bacterial microcompartment</location>
    </subcellularLocation>
</comment>
<comment type="similarity">
    <text evidence="1">Belongs to the EutC family.</text>
</comment>
<name>EUTC_SALHS</name>
<sequence>MDQKQIEEIVRSVMASMGQDVPQPVAPSMQEGAKPQCAAPTVTESCALDLGSAEAKAWIGVENPHRADVLTELRRSTAARVCTGRAGPRPRTQALLRFLADHSRSKDTVLKEVPEEWVKAQGLLEVRSEISDKNLYLTRPDMGRRLSPEAIDALKSQCVMNPDVQVVVSDGLSTDAITANYEEILPPLLAGLKQAGLNVGTPFFVRYGRVKIEDQIGEILGAKVVILLVGERPGLGQSESLSCYAVYSPRVASTVEADRTCISNIHQGGTPPVEAAAVIVDLAKRMLEQKASGINMTR</sequence>
<feature type="chain" id="PRO_1000130101" description="Ethanolamine ammonia-lyase small subunit">
    <location>
        <begin position="1"/>
        <end position="298"/>
    </location>
</feature>
<feature type="binding site" evidence="1">
    <location>
        <position position="210"/>
    </location>
    <ligand>
        <name>adenosylcob(III)alamin</name>
        <dbReference type="ChEBI" id="CHEBI:18408"/>
    </ligand>
</feature>
<feature type="binding site" evidence="1">
    <location>
        <position position="231"/>
    </location>
    <ligand>
        <name>adenosylcob(III)alamin</name>
        <dbReference type="ChEBI" id="CHEBI:18408"/>
    </ligand>
</feature>
<feature type="binding site" evidence="1">
    <location>
        <position position="261"/>
    </location>
    <ligand>
        <name>adenosylcob(III)alamin</name>
        <dbReference type="ChEBI" id="CHEBI:18408"/>
    </ligand>
</feature>
<evidence type="ECO:0000255" key="1">
    <source>
        <dbReference type="HAMAP-Rule" id="MF_00601"/>
    </source>
</evidence>
<protein>
    <recommendedName>
        <fullName evidence="1">Ethanolamine ammonia-lyase small subunit</fullName>
        <shortName evidence="1">EAL small subunit</shortName>
        <ecNumber evidence="1">4.3.1.7</ecNumber>
    </recommendedName>
</protein>
<organism>
    <name type="scientific">Salmonella heidelberg (strain SL476)</name>
    <dbReference type="NCBI Taxonomy" id="454169"/>
    <lineage>
        <taxon>Bacteria</taxon>
        <taxon>Pseudomonadati</taxon>
        <taxon>Pseudomonadota</taxon>
        <taxon>Gammaproteobacteria</taxon>
        <taxon>Enterobacterales</taxon>
        <taxon>Enterobacteriaceae</taxon>
        <taxon>Salmonella</taxon>
    </lineage>
</organism>